<keyword id="KW-0963">Cytoplasm</keyword>
<keyword id="KW-0444">Lipid biosynthesis</keyword>
<keyword id="KW-0443">Lipid metabolism</keyword>
<keyword id="KW-0594">Phospholipid biosynthesis</keyword>
<keyword id="KW-1208">Phospholipid metabolism</keyword>
<keyword id="KW-1185">Reference proteome</keyword>
<keyword id="KW-0808">Transferase</keyword>
<dbReference type="EC" id="2.3.1.274" evidence="1"/>
<dbReference type="EMBL" id="CP000822">
    <property type="protein sequence ID" value="ABV13095.1"/>
    <property type="status" value="ALT_INIT"/>
    <property type="molecule type" value="Genomic_DNA"/>
</dbReference>
<dbReference type="RefSeq" id="WP_071818860.1">
    <property type="nucleotide sequence ID" value="NC_009792.1"/>
</dbReference>
<dbReference type="SMR" id="A8AHY2"/>
<dbReference type="STRING" id="290338.CKO_01968"/>
<dbReference type="GeneID" id="45135943"/>
<dbReference type="KEGG" id="cko:CKO_01968"/>
<dbReference type="HOGENOM" id="CLU_039379_1_0_6"/>
<dbReference type="OrthoDB" id="9806408at2"/>
<dbReference type="UniPathway" id="UPA00085"/>
<dbReference type="Proteomes" id="UP000008148">
    <property type="component" value="Chromosome"/>
</dbReference>
<dbReference type="GO" id="GO:0005737">
    <property type="term" value="C:cytoplasm"/>
    <property type="evidence" value="ECO:0007669"/>
    <property type="project" value="UniProtKB-SubCell"/>
</dbReference>
<dbReference type="GO" id="GO:0043811">
    <property type="term" value="F:phosphate:acyl-[acyl carrier protein] acyltransferase activity"/>
    <property type="evidence" value="ECO:0007669"/>
    <property type="project" value="UniProtKB-UniRule"/>
</dbReference>
<dbReference type="GO" id="GO:0006633">
    <property type="term" value="P:fatty acid biosynthetic process"/>
    <property type="evidence" value="ECO:0007669"/>
    <property type="project" value="UniProtKB-UniRule"/>
</dbReference>
<dbReference type="GO" id="GO:0008654">
    <property type="term" value="P:phospholipid biosynthetic process"/>
    <property type="evidence" value="ECO:0007669"/>
    <property type="project" value="UniProtKB-KW"/>
</dbReference>
<dbReference type="FunFam" id="3.40.718.10:FF:000008">
    <property type="entry name" value="Phosphate acyltransferase"/>
    <property type="match status" value="1"/>
</dbReference>
<dbReference type="Gene3D" id="3.40.718.10">
    <property type="entry name" value="Isopropylmalate Dehydrogenase"/>
    <property type="match status" value="1"/>
</dbReference>
<dbReference type="HAMAP" id="MF_00019">
    <property type="entry name" value="PlsX"/>
    <property type="match status" value="1"/>
</dbReference>
<dbReference type="InterPro" id="IPR003664">
    <property type="entry name" value="FA_synthesis"/>
</dbReference>
<dbReference type="InterPro" id="IPR012281">
    <property type="entry name" value="Phospholipid_synth_PlsX-like"/>
</dbReference>
<dbReference type="NCBIfam" id="TIGR00182">
    <property type="entry name" value="plsX"/>
    <property type="match status" value="1"/>
</dbReference>
<dbReference type="PANTHER" id="PTHR30100">
    <property type="entry name" value="FATTY ACID/PHOSPHOLIPID SYNTHESIS PROTEIN PLSX"/>
    <property type="match status" value="1"/>
</dbReference>
<dbReference type="PANTHER" id="PTHR30100:SF1">
    <property type="entry name" value="PHOSPHATE ACYLTRANSFERASE"/>
    <property type="match status" value="1"/>
</dbReference>
<dbReference type="Pfam" id="PF02504">
    <property type="entry name" value="FA_synthesis"/>
    <property type="match status" value="1"/>
</dbReference>
<dbReference type="PIRSF" id="PIRSF002465">
    <property type="entry name" value="Phsphlp_syn_PlsX"/>
    <property type="match status" value="1"/>
</dbReference>
<dbReference type="SUPFAM" id="SSF53659">
    <property type="entry name" value="Isocitrate/Isopropylmalate dehydrogenase-like"/>
    <property type="match status" value="1"/>
</dbReference>
<organism>
    <name type="scientific">Citrobacter koseri (strain ATCC BAA-895 / CDC 4225-83 / SGSC4696)</name>
    <dbReference type="NCBI Taxonomy" id="290338"/>
    <lineage>
        <taxon>Bacteria</taxon>
        <taxon>Pseudomonadati</taxon>
        <taxon>Pseudomonadota</taxon>
        <taxon>Gammaproteobacteria</taxon>
        <taxon>Enterobacterales</taxon>
        <taxon>Enterobacteriaceae</taxon>
        <taxon>Citrobacter</taxon>
    </lineage>
</organism>
<accession>A8AHY2</accession>
<comment type="function">
    <text evidence="1">Catalyzes the reversible formation of acyl-phosphate (acyl-PO(4)) from acyl-[acyl-carrier-protein] (acyl-ACP). This enzyme utilizes acyl-ACP as fatty acyl donor, but not acyl-CoA.</text>
</comment>
<comment type="catalytic activity">
    <reaction evidence="1">
        <text>a fatty acyl-[ACP] + phosphate = an acyl phosphate + holo-[ACP]</text>
        <dbReference type="Rhea" id="RHEA:42292"/>
        <dbReference type="Rhea" id="RHEA-COMP:9685"/>
        <dbReference type="Rhea" id="RHEA-COMP:14125"/>
        <dbReference type="ChEBI" id="CHEBI:43474"/>
        <dbReference type="ChEBI" id="CHEBI:59918"/>
        <dbReference type="ChEBI" id="CHEBI:64479"/>
        <dbReference type="ChEBI" id="CHEBI:138651"/>
        <dbReference type="EC" id="2.3.1.274"/>
    </reaction>
</comment>
<comment type="pathway">
    <text evidence="1">Lipid metabolism; phospholipid metabolism.</text>
</comment>
<comment type="subunit">
    <text evidence="1">Homodimer. Probably interacts with PlsY.</text>
</comment>
<comment type="subcellular location">
    <subcellularLocation>
        <location evidence="1">Cytoplasm</location>
    </subcellularLocation>
    <text evidence="1">Associated with the membrane possibly through PlsY.</text>
</comment>
<comment type="similarity">
    <text evidence="1">Belongs to the PlsX family.</text>
</comment>
<comment type="sequence caution" evidence="2">
    <conflict type="erroneous initiation">
        <sequence resource="EMBL-CDS" id="ABV13095"/>
    </conflict>
</comment>
<proteinExistence type="inferred from homology"/>
<gene>
    <name evidence="1" type="primary">plsX</name>
    <name type="ordered locus">CKO_01968</name>
</gene>
<evidence type="ECO:0000255" key="1">
    <source>
        <dbReference type="HAMAP-Rule" id="MF_00019"/>
    </source>
</evidence>
<evidence type="ECO:0000305" key="2"/>
<sequence length="359" mass="38672">MTRLTLALDVMGGDFGPSVTVPAALQALNSNSQLTLLLVGDPDTITPLLAKADFEQRSRLQIIPAQSVIASDARPSQAIRASRGSSMRVALELVKEGRAEACVSAGNTGALMGLAKLLLKPLEGIERPALMTVLPHQQKGKTVVLDLGANVDCDSTMLVQFAVMGSVMAEEVIGITNPRVALLNIGEEETKGLDSIRDASALLKTVPSINYIGYLEANELLTGKTDVLVCDGFTGNVTLKTMEGVVRMFLSLLKSQGESKKRSWWLLLLKRWLQKSLTRRFSHLNPDQYNGACLLGLRGTVIKSHGAANQRAFAVAIEQAVQAVQRQVPQRIAARLESVYPAGFELLEGGKNGHSRVHN</sequence>
<name>PLSX_CITK8</name>
<protein>
    <recommendedName>
        <fullName evidence="1">Phosphate acyltransferase</fullName>
        <ecNumber evidence="1">2.3.1.274</ecNumber>
    </recommendedName>
    <alternativeName>
        <fullName evidence="1">Acyl-ACP phosphotransacylase</fullName>
    </alternativeName>
    <alternativeName>
        <fullName evidence="1">Acyl-[acyl-carrier-protein]--phosphate acyltransferase</fullName>
    </alternativeName>
    <alternativeName>
        <fullName evidence="1">Phosphate-acyl-ACP acyltransferase</fullName>
    </alternativeName>
</protein>
<feature type="chain" id="PRO_0000329216" description="Phosphate acyltransferase">
    <location>
        <begin position="1"/>
        <end position="359"/>
    </location>
</feature>
<reference key="1">
    <citation type="submission" date="2007-08" db="EMBL/GenBank/DDBJ databases">
        <authorList>
            <consortium name="The Citrobacter koseri Genome Sequencing Project"/>
            <person name="McClelland M."/>
            <person name="Sanderson E.K."/>
            <person name="Porwollik S."/>
            <person name="Spieth J."/>
            <person name="Clifton W.S."/>
            <person name="Latreille P."/>
            <person name="Courtney L."/>
            <person name="Wang C."/>
            <person name="Pepin K."/>
            <person name="Bhonagiri V."/>
            <person name="Nash W."/>
            <person name="Johnson M."/>
            <person name="Thiruvilangam P."/>
            <person name="Wilson R."/>
        </authorList>
    </citation>
    <scope>NUCLEOTIDE SEQUENCE [LARGE SCALE GENOMIC DNA]</scope>
    <source>
        <strain>ATCC BAA-895 / CDC 4225-83 / SGSC4696</strain>
    </source>
</reference>